<name>Y3493_YERPA</name>
<protein>
    <recommendedName>
        <fullName evidence="1">UPF0758 protein YPA_3493</fullName>
    </recommendedName>
</protein>
<accession>Q1C267</accession>
<comment type="similarity">
    <text evidence="1">Belongs to the UPF0758 family. YicR subfamily.</text>
</comment>
<reference key="1">
    <citation type="journal article" date="2006" name="J. Bacteriol.">
        <title>Complete genome sequence of Yersinia pestis strains Antiqua and Nepal516: evidence of gene reduction in an emerging pathogen.</title>
        <authorList>
            <person name="Chain P.S.G."/>
            <person name="Hu P."/>
            <person name="Malfatti S.A."/>
            <person name="Radnedge L."/>
            <person name="Larimer F."/>
            <person name="Vergez L.M."/>
            <person name="Worsham P."/>
            <person name="Chu M.C."/>
            <person name="Andersen G.L."/>
        </authorList>
    </citation>
    <scope>NUCLEOTIDE SEQUENCE [LARGE SCALE GENOMIC DNA]</scope>
    <source>
        <strain>Antiqua</strain>
    </source>
</reference>
<sequence length="222" mass="24814">MDEWYGQVAPREKLLKYGAAVLTDAELLAIFLRTGIPGMHVMKMAEYLIETFGSLHGLISADYQTLCAHKGIGASKYSQIQAIGELACRCFSSHLMRESVLLNPGITQKFLQNILSHREREIFLVVFLDNQHRVIRHEEMFTGTISSVEVHPREIVREALKVNAAALILAHNHPSGKAEPSQADRLITTQVIKACSLLDIRVLDHLVVGRGECVSFAERGWL</sequence>
<evidence type="ECO:0000255" key="1">
    <source>
        <dbReference type="HAMAP-Rule" id="MF_00018"/>
    </source>
</evidence>
<evidence type="ECO:0000255" key="2">
    <source>
        <dbReference type="PROSITE-ProRule" id="PRU01182"/>
    </source>
</evidence>
<gene>
    <name type="ordered locus">YPA_3493</name>
</gene>
<dbReference type="EMBL" id="CP000308">
    <property type="protein sequence ID" value="ABG15455.1"/>
    <property type="molecule type" value="Genomic_DNA"/>
</dbReference>
<dbReference type="SMR" id="Q1C267"/>
<dbReference type="KEGG" id="ypa:YPA_3493"/>
<dbReference type="Proteomes" id="UP000001971">
    <property type="component" value="Chromosome"/>
</dbReference>
<dbReference type="GO" id="GO:0046872">
    <property type="term" value="F:metal ion binding"/>
    <property type="evidence" value="ECO:0007669"/>
    <property type="project" value="UniProtKB-KW"/>
</dbReference>
<dbReference type="GO" id="GO:0008237">
    <property type="term" value="F:metallopeptidase activity"/>
    <property type="evidence" value="ECO:0007669"/>
    <property type="project" value="UniProtKB-KW"/>
</dbReference>
<dbReference type="GO" id="GO:0006508">
    <property type="term" value="P:proteolysis"/>
    <property type="evidence" value="ECO:0007669"/>
    <property type="project" value="UniProtKB-KW"/>
</dbReference>
<dbReference type="CDD" id="cd08071">
    <property type="entry name" value="MPN_DUF2466"/>
    <property type="match status" value="1"/>
</dbReference>
<dbReference type="Gene3D" id="3.40.140.10">
    <property type="entry name" value="Cytidine Deaminase, domain 2"/>
    <property type="match status" value="1"/>
</dbReference>
<dbReference type="HAMAP" id="MF_00018">
    <property type="entry name" value="UPF0758_YicR"/>
    <property type="match status" value="1"/>
</dbReference>
<dbReference type="InterPro" id="IPR037518">
    <property type="entry name" value="MPN"/>
</dbReference>
<dbReference type="InterPro" id="IPR025657">
    <property type="entry name" value="RadC_JAB"/>
</dbReference>
<dbReference type="InterPro" id="IPR010994">
    <property type="entry name" value="RuvA_2-like"/>
</dbReference>
<dbReference type="InterPro" id="IPR001405">
    <property type="entry name" value="UPF0758"/>
</dbReference>
<dbReference type="InterPro" id="IPR020891">
    <property type="entry name" value="UPF0758_CS"/>
</dbReference>
<dbReference type="InterPro" id="IPR046778">
    <property type="entry name" value="UPF0758_N"/>
</dbReference>
<dbReference type="InterPro" id="IPR022820">
    <property type="entry name" value="UPF0758_YicR"/>
</dbReference>
<dbReference type="NCBIfam" id="NF000642">
    <property type="entry name" value="PRK00024.1"/>
    <property type="match status" value="1"/>
</dbReference>
<dbReference type="NCBIfam" id="TIGR00608">
    <property type="entry name" value="radc"/>
    <property type="match status" value="1"/>
</dbReference>
<dbReference type="PANTHER" id="PTHR30471">
    <property type="entry name" value="DNA REPAIR PROTEIN RADC"/>
    <property type="match status" value="1"/>
</dbReference>
<dbReference type="PANTHER" id="PTHR30471:SF3">
    <property type="entry name" value="UPF0758 PROTEIN YEES-RELATED"/>
    <property type="match status" value="1"/>
</dbReference>
<dbReference type="Pfam" id="PF04002">
    <property type="entry name" value="RadC"/>
    <property type="match status" value="1"/>
</dbReference>
<dbReference type="Pfam" id="PF20582">
    <property type="entry name" value="UPF0758_N"/>
    <property type="match status" value="1"/>
</dbReference>
<dbReference type="SUPFAM" id="SSF47781">
    <property type="entry name" value="RuvA domain 2-like"/>
    <property type="match status" value="1"/>
</dbReference>
<dbReference type="PROSITE" id="PS50249">
    <property type="entry name" value="MPN"/>
    <property type="match status" value="1"/>
</dbReference>
<dbReference type="PROSITE" id="PS01302">
    <property type="entry name" value="UPF0758"/>
    <property type="match status" value="1"/>
</dbReference>
<keyword id="KW-0378">Hydrolase</keyword>
<keyword id="KW-0479">Metal-binding</keyword>
<keyword id="KW-0482">Metalloprotease</keyword>
<keyword id="KW-0645">Protease</keyword>
<keyword id="KW-0862">Zinc</keyword>
<organism>
    <name type="scientific">Yersinia pestis bv. Antiqua (strain Antiqua)</name>
    <dbReference type="NCBI Taxonomy" id="360102"/>
    <lineage>
        <taxon>Bacteria</taxon>
        <taxon>Pseudomonadati</taxon>
        <taxon>Pseudomonadota</taxon>
        <taxon>Gammaproteobacteria</taxon>
        <taxon>Enterobacterales</taxon>
        <taxon>Yersiniaceae</taxon>
        <taxon>Yersinia</taxon>
    </lineage>
</organism>
<feature type="chain" id="PRO_1000001707" description="UPF0758 protein YPA_3493">
    <location>
        <begin position="1"/>
        <end position="222"/>
    </location>
</feature>
<feature type="domain" description="MPN" evidence="2">
    <location>
        <begin position="100"/>
        <end position="222"/>
    </location>
</feature>
<feature type="short sequence motif" description="JAMM motif" evidence="2">
    <location>
        <begin position="171"/>
        <end position="184"/>
    </location>
</feature>
<feature type="binding site" evidence="2">
    <location>
        <position position="171"/>
    </location>
    <ligand>
        <name>Zn(2+)</name>
        <dbReference type="ChEBI" id="CHEBI:29105"/>
        <note>catalytic</note>
    </ligand>
</feature>
<feature type="binding site" evidence="2">
    <location>
        <position position="173"/>
    </location>
    <ligand>
        <name>Zn(2+)</name>
        <dbReference type="ChEBI" id="CHEBI:29105"/>
        <note>catalytic</note>
    </ligand>
</feature>
<feature type="binding site" evidence="2">
    <location>
        <position position="184"/>
    </location>
    <ligand>
        <name>Zn(2+)</name>
        <dbReference type="ChEBI" id="CHEBI:29105"/>
        <note>catalytic</note>
    </ligand>
</feature>
<proteinExistence type="inferred from homology"/>